<organism>
    <name type="scientific">Paraburkholderia xenovorans (strain LB400)</name>
    <dbReference type="NCBI Taxonomy" id="266265"/>
    <lineage>
        <taxon>Bacteria</taxon>
        <taxon>Pseudomonadati</taxon>
        <taxon>Pseudomonadota</taxon>
        <taxon>Betaproteobacteria</taxon>
        <taxon>Burkholderiales</taxon>
        <taxon>Burkholderiaceae</taxon>
        <taxon>Paraburkholderia</taxon>
    </lineage>
</organism>
<accession>Q13QH9</accession>
<keyword id="KW-0058">Aromatic hydrocarbons catabolism</keyword>
<keyword id="KW-0223">Dioxygenase</keyword>
<keyword id="KW-0408">Iron</keyword>
<keyword id="KW-0560">Oxidoreductase</keyword>
<keyword id="KW-1185">Reference proteome</keyword>
<protein>
    <recommendedName>
        <fullName evidence="1">2,3-dihydroxyphenylpropionate/2,3-dihydroxicinnamic acid 1,2-dioxygenase</fullName>
        <ecNumber evidence="1">1.13.11.16</ecNumber>
    </recommendedName>
    <alternativeName>
        <fullName evidence="1">3-carboxyethylcatechol 2,3-dioxygenase</fullName>
    </alternativeName>
</protein>
<proteinExistence type="inferred from homology"/>
<evidence type="ECO:0000255" key="1">
    <source>
        <dbReference type="HAMAP-Rule" id="MF_01653"/>
    </source>
</evidence>
<comment type="function">
    <text evidence="1">Catalyzes the non-heme iron(II)-dependent oxidative cleavage of 2,3-dihydroxyphenylpropionic acid and 2,3-dihydroxicinnamic acid into 2-hydroxy-6-ketononadienedioate and 2-hydroxy-6-ketononatrienedioate, respectively.</text>
</comment>
<comment type="catalytic activity">
    <reaction evidence="1">
        <text>3-(2,3-dihydroxyphenyl)propanoate + O2 = (2Z,4E)-2-hydroxy-6-oxonona-2,4-dienedioate + H(+)</text>
        <dbReference type="Rhea" id="RHEA:23840"/>
        <dbReference type="ChEBI" id="CHEBI:15378"/>
        <dbReference type="ChEBI" id="CHEBI:15379"/>
        <dbReference type="ChEBI" id="CHEBI:46951"/>
        <dbReference type="ChEBI" id="CHEBI:66887"/>
        <dbReference type="EC" id="1.13.11.16"/>
    </reaction>
</comment>
<comment type="catalytic activity">
    <reaction evidence="1">
        <text>(2E)-3-(2,3-dihydroxyphenyl)prop-2-enoate + O2 = (2Z,4E,7E)-2-hydroxy-6-oxonona-2,4,7-trienedioate + H(+)</text>
        <dbReference type="Rhea" id="RHEA:25054"/>
        <dbReference type="ChEBI" id="CHEBI:15378"/>
        <dbReference type="ChEBI" id="CHEBI:15379"/>
        <dbReference type="ChEBI" id="CHEBI:58642"/>
        <dbReference type="ChEBI" id="CHEBI:66888"/>
        <dbReference type="EC" id="1.13.11.16"/>
    </reaction>
</comment>
<comment type="cofactor">
    <cofactor evidence="1">
        <name>Fe(2+)</name>
        <dbReference type="ChEBI" id="CHEBI:29033"/>
    </cofactor>
</comment>
<comment type="pathway">
    <text evidence="1">Aromatic compound metabolism; 3-phenylpropanoate degradation.</text>
</comment>
<comment type="subunit">
    <text evidence="1">Homotetramer.</text>
</comment>
<comment type="similarity">
    <text evidence="1">Belongs to the LigB/MhpB extradiol dioxygenase family.</text>
</comment>
<feature type="chain" id="PRO_0000337646" description="2,3-dihydroxyphenylpropionate/2,3-dihydroxicinnamic acid 1,2-dioxygenase">
    <location>
        <begin position="1"/>
        <end position="316"/>
    </location>
</feature>
<feature type="active site" description="Proton donor" evidence="1">
    <location>
        <position position="115"/>
    </location>
</feature>
<feature type="active site" description="Proton acceptor" evidence="1">
    <location>
        <position position="179"/>
    </location>
</feature>
<dbReference type="EC" id="1.13.11.16" evidence="1"/>
<dbReference type="EMBL" id="CP000271">
    <property type="protein sequence ID" value="ABE33660.1"/>
    <property type="molecule type" value="Genomic_DNA"/>
</dbReference>
<dbReference type="RefSeq" id="WP_011491020.1">
    <property type="nucleotide sequence ID" value="NC_007952.1"/>
</dbReference>
<dbReference type="SMR" id="Q13QH9"/>
<dbReference type="STRING" id="266265.Bxe_B2328"/>
<dbReference type="KEGG" id="bxb:DR64_4660"/>
<dbReference type="KEGG" id="bxe:Bxe_B2328"/>
<dbReference type="PATRIC" id="fig|266265.5.peg.5384"/>
<dbReference type="eggNOG" id="COG3384">
    <property type="taxonomic scope" value="Bacteria"/>
</dbReference>
<dbReference type="OrthoDB" id="8673673at2"/>
<dbReference type="UniPathway" id="UPA00714"/>
<dbReference type="Proteomes" id="UP000001817">
    <property type="component" value="Chromosome 2"/>
</dbReference>
<dbReference type="GO" id="GO:0047070">
    <property type="term" value="F:3-carboxyethylcatechol 2,3-dioxygenase activity"/>
    <property type="evidence" value="ECO:0007669"/>
    <property type="project" value="UniProtKB-UniRule"/>
</dbReference>
<dbReference type="GO" id="GO:0008198">
    <property type="term" value="F:ferrous iron binding"/>
    <property type="evidence" value="ECO:0007669"/>
    <property type="project" value="InterPro"/>
</dbReference>
<dbReference type="GO" id="GO:0019380">
    <property type="term" value="P:3-phenylpropionate catabolic process"/>
    <property type="evidence" value="ECO:0007669"/>
    <property type="project" value="UniProtKB-UniRule"/>
</dbReference>
<dbReference type="CDD" id="cd07365">
    <property type="entry name" value="MhpB_like"/>
    <property type="match status" value="1"/>
</dbReference>
<dbReference type="Gene3D" id="3.40.830.10">
    <property type="entry name" value="LigB-like"/>
    <property type="match status" value="1"/>
</dbReference>
<dbReference type="HAMAP" id="MF_01653">
    <property type="entry name" value="MhpB"/>
    <property type="match status" value="1"/>
</dbReference>
<dbReference type="InterPro" id="IPR023789">
    <property type="entry name" value="DHPP/DHXA_dioxygenase"/>
</dbReference>
<dbReference type="InterPro" id="IPR004183">
    <property type="entry name" value="Xdiol_dOase_suB"/>
</dbReference>
<dbReference type="NCBIfam" id="NF009908">
    <property type="entry name" value="PRK13370.1-2"/>
    <property type="match status" value="1"/>
</dbReference>
<dbReference type="NCBIfam" id="NF009909">
    <property type="entry name" value="PRK13370.1-3"/>
    <property type="match status" value="1"/>
</dbReference>
<dbReference type="NCBIfam" id="NF009910">
    <property type="entry name" value="PRK13370.1-4"/>
    <property type="match status" value="1"/>
</dbReference>
<dbReference type="Pfam" id="PF02900">
    <property type="entry name" value="LigB"/>
    <property type="match status" value="1"/>
</dbReference>
<dbReference type="SUPFAM" id="SSF53213">
    <property type="entry name" value="LigB-like"/>
    <property type="match status" value="1"/>
</dbReference>
<gene>
    <name evidence="1" type="primary">mhpB</name>
    <name type="ordered locus">Bxeno_B0692</name>
    <name type="ORF">Bxe_B2328</name>
</gene>
<sequence>MPVLLECLSHTPLSGYCDPAPEVVAEVGRIHAAARARVADFDPQLVVVFAPDHYNGFFYDVMPPFCIGASASAVGDFGSLAGQLAVPADLALDLAQAVLAADVDVALSYRMQVDHGCAQALEILTGSLDRYPVVPVFINSVAPPMASCRRARLLGDALGRSLARSGQRVLVIGSGGISHEPPVPELAGATDEVAERLIAGRNPSREARAARQARTVAAARAFAAGDSRLHPLNPEWDRAFLKLLEEGQLPALDGFTDSAITREAGKSAHEVRTWIAAFGALQAYGPYRATLDYYRPIPEWIAGFGAMHARPIAETA</sequence>
<reference key="1">
    <citation type="journal article" date="2006" name="Proc. Natl. Acad. Sci. U.S.A.">
        <title>Burkholderia xenovorans LB400 harbors a multi-replicon, 9.73-Mbp genome shaped for versatility.</title>
        <authorList>
            <person name="Chain P.S.G."/>
            <person name="Denef V.J."/>
            <person name="Konstantinidis K.T."/>
            <person name="Vergez L.M."/>
            <person name="Agullo L."/>
            <person name="Reyes V.L."/>
            <person name="Hauser L."/>
            <person name="Cordova M."/>
            <person name="Gomez L."/>
            <person name="Gonzalez M."/>
            <person name="Land M."/>
            <person name="Lao V."/>
            <person name="Larimer F."/>
            <person name="LiPuma J.J."/>
            <person name="Mahenthiralingam E."/>
            <person name="Malfatti S.A."/>
            <person name="Marx C.J."/>
            <person name="Parnell J.J."/>
            <person name="Ramette A."/>
            <person name="Richardson P."/>
            <person name="Seeger M."/>
            <person name="Smith D."/>
            <person name="Spilker T."/>
            <person name="Sul W.J."/>
            <person name="Tsoi T.V."/>
            <person name="Ulrich L.E."/>
            <person name="Zhulin I.B."/>
            <person name="Tiedje J.M."/>
        </authorList>
    </citation>
    <scope>NUCLEOTIDE SEQUENCE [LARGE SCALE GENOMIC DNA]</scope>
    <source>
        <strain>LB400</strain>
    </source>
</reference>
<name>MHPB_PARXL</name>